<proteinExistence type="inferred from homology"/>
<reference key="1">
    <citation type="journal article" date="2000" name="Nature">
        <title>The genome sequence of the thermoacidophilic scavenger Thermoplasma acidophilum.</title>
        <authorList>
            <person name="Ruepp A."/>
            <person name="Graml W."/>
            <person name="Santos-Martinez M.-L."/>
            <person name="Koretke K.K."/>
            <person name="Volker C."/>
            <person name="Mewes H.-W."/>
            <person name="Frishman D."/>
            <person name="Stocker S."/>
            <person name="Lupas A.N."/>
            <person name="Baumeister W."/>
        </authorList>
    </citation>
    <scope>NUCLEOTIDE SEQUENCE [LARGE SCALE GENOMIC DNA]</scope>
    <source>
        <strain>ATCC 25905 / DSM 1728 / JCM 9062 / NBRC 15155 / AMRC-C165</strain>
    </source>
</reference>
<comment type="function">
    <text evidence="1">One of the primary rRNA binding proteins, it binds directly to 16S rRNA where it nucleates assembly of the body of the 30S subunit.</text>
</comment>
<comment type="function">
    <text evidence="1">With S5 and S12 plays an important role in translational accuracy.</text>
</comment>
<comment type="subunit">
    <text evidence="1">Part of the 30S ribosomal subunit. Contacts protein S5. The interaction surface between S4 and S5 is involved in control of translational fidelity.</text>
</comment>
<comment type="similarity">
    <text evidence="1">Belongs to the universal ribosomal protein uS4 family.</text>
</comment>
<dbReference type="EMBL" id="AL445066">
    <property type="protein sequence ID" value="CAC12161.1"/>
    <property type="molecule type" value="Genomic_DNA"/>
</dbReference>
<dbReference type="RefSeq" id="WP_010901443.1">
    <property type="nucleotide sequence ID" value="NC_002578.1"/>
</dbReference>
<dbReference type="SMR" id="Q9HJD7"/>
<dbReference type="FunCoup" id="Q9HJD7">
    <property type="interactions" value="161"/>
</dbReference>
<dbReference type="STRING" id="273075.gene:9572253"/>
<dbReference type="PaxDb" id="273075-Ta1032"/>
<dbReference type="EnsemblBacteria" id="CAC12161">
    <property type="protein sequence ID" value="CAC12161"/>
    <property type="gene ID" value="CAC12161"/>
</dbReference>
<dbReference type="KEGG" id="tac:Ta1032"/>
<dbReference type="eggNOG" id="arCOG04239">
    <property type="taxonomic scope" value="Archaea"/>
</dbReference>
<dbReference type="HOGENOM" id="CLU_089738_1_1_2"/>
<dbReference type="InParanoid" id="Q9HJD7"/>
<dbReference type="OrthoDB" id="10429at2157"/>
<dbReference type="Proteomes" id="UP000001024">
    <property type="component" value="Chromosome"/>
</dbReference>
<dbReference type="GO" id="GO:0015935">
    <property type="term" value="C:small ribosomal subunit"/>
    <property type="evidence" value="ECO:0007669"/>
    <property type="project" value="InterPro"/>
</dbReference>
<dbReference type="GO" id="GO:0019843">
    <property type="term" value="F:rRNA binding"/>
    <property type="evidence" value="ECO:0007669"/>
    <property type="project" value="UniProtKB-UniRule"/>
</dbReference>
<dbReference type="GO" id="GO:0003735">
    <property type="term" value="F:structural constituent of ribosome"/>
    <property type="evidence" value="ECO:0007669"/>
    <property type="project" value="InterPro"/>
</dbReference>
<dbReference type="GO" id="GO:0042274">
    <property type="term" value="P:ribosomal small subunit biogenesis"/>
    <property type="evidence" value="ECO:0007669"/>
    <property type="project" value="TreeGrafter"/>
</dbReference>
<dbReference type="GO" id="GO:0006412">
    <property type="term" value="P:translation"/>
    <property type="evidence" value="ECO:0007669"/>
    <property type="project" value="UniProtKB-UniRule"/>
</dbReference>
<dbReference type="CDD" id="cd00165">
    <property type="entry name" value="S4"/>
    <property type="match status" value="1"/>
</dbReference>
<dbReference type="Gene3D" id="3.10.290.10">
    <property type="entry name" value="RNA-binding S4 domain"/>
    <property type="match status" value="1"/>
</dbReference>
<dbReference type="HAMAP" id="MF_01306_A">
    <property type="entry name" value="Ribosomal_uS4_A"/>
    <property type="match status" value="1"/>
</dbReference>
<dbReference type="InterPro" id="IPR022801">
    <property type="entry name" value="Ribosomal_uS4"/>
</dbReference>
<dbReference type="InterPro" id="IPR022802">
    <property type="entry name" value="Ribosomal_uS4_arc"/>
</dbReference>
<dbReference type="InterPro" id="IPR018079">
    <property type="entry name" value="Ribosomal_uS4_CS"/>
</dbReference>
<dbReference type="InterPro" id="IPR005710">
    <property type="entry name" value="Ribosomal_uS4_euk/arc"/>
</dbReference>
<dbReference type="InterPro" id="IPR001912">
    <property type="entry name" value="Ribosomal_uS4_N"/>
</dbReference>
<dbReference type="InterPro" id="IPR002942">
    <property type="entry name" value="S4_RNA-bd"/>
</dbReference>
<dbReference type="InterPro" id="IPR036986">
    <property type="entry name" value="S4_RNA-bd_sf"/>
</dbReference>
<dbReference type="NCBIfam" id="NF003139">
    <property type="entry name" value="PRK04051.1"/>
    <property type="match status" value="1"/>
</dbReference>
<dbReference type="NCBIfam" id="TIGR01018">
    <property type="entry name" value="uS4_arch"/>
    <property type="match status" value="1"/>
</dbReference>
<dbReference type="PANTHER" id="PTHR11831">
    <property type="entry name" value="30S 40S RIBOSOMAL PROTEIN"/>
    <property type="match status" value="1"/>
</dbReference>
<dbReference type="PANTHER" id="PTHR11831:SF5">
    <property type="entry name" value="40S RIBOSOMAL PROTEIN S9"/>
    <property type="match status" value="1"/>
</dbReference>
<dbReference type="Pfam" id="PF00163">
    <property type="entry name" value="Ribosomal_S4"/>
    <property type="match status" value="1"/>
</dbReference>
<dbReference type="Pfam" id="PF01479">
    <property type="entry name" value="S4"/>
    <property type="match status" value="1"/>
</dbReference>
<dbReference type="SMART" id="SM01390">
    <property type="entry name" value="Ribosomal_S4"/>
    <property type="match status" value="1"/>
</dbReference>
<dbReference type="SMART" id="SM00363">
    <property type="entry name" value="S4"/>
    <property type="match status" value="1"/>
</dbReference>
<dbReference type="SUPFAM" id="SSF55174">
    <property type="entry name" value="Alpha-L RNA-binding motif"/>
    <property type="match status" value="1"/>
</dbReference>
<dbReference type="PROSITE" id="PS00632">
    <property type="entry name" value="RIBOSOMAL_S4"/>
    <property type="match status" value="1"/>
</dbReference>
<dbReference type="PROSITE" id="PS50889">
    <property type="entry name" value="S4"/>
    <property type="match status" value="1"/>
</dbReference>
<organism>
    <name type="scientific">Thermoplasma acidophilum (strain ATCC 25905 / DSM 1728 / JCM 9062 / NBRC 15155 / AMRC-C165)</name>
    <dbReference type="NCBI Taxonomy" id="273075"/>
    <lineage>
        <taxon>Archaea</taxon>
        <taxon>Methanobacteriati</taxon>
        <taxon>Thermoplasmatota</taxon>
        <taxon>Thermoplasmata</taxon>
        <taxon>Thermoplasmatales</taxon>
        <taxon>Thermoplasmataceae</taxon>
        <taxon>Thermoplasma</taxon>
    </lineage>
</organism>
<protein>
    <recommendedName>
        <fullName evidence="1">Small ribosomal subunit protein uS4</fullName>
    </recommendedName>
    <alternativeName>
        <fullName evidence="3">30S ribosomal protein S4</fullName>
    </alternativeName>
</protein>
<name>RS4_THEAC</name>
<feature type="chain" id="PRO_0000132523" description="Small ribosomal subunit protein uS4">
    <location>
        <begin position="1"/>
        <end position="199"/>
    </location>
</feature>
<feature type="domain" description="S4 RNA-binding" evidence="1">
    <location>
        <begin position="106"/>
        <end position="170"/>
    </location>
</feature>
<feature type="region of interest" description="Disordered" evidence="2">
    <location>
        <begin position="177"/>
        <end position="199"/>
    </location>
</feature>
<gene>
    <name evidence="1" type="primary">rps4</name>
    <name type="ordered locus">Ta1032</name>
</gene>
<evidence type="ECO:0000255" key="1">
    <source>
        <dbReference type="HAMAP-Rule" id="MF_01306"/>
    </source>
</evidence>
<evidence type="ECO:0000256" key="2">
    <source>
        <dbReference type="SAM" id="MobiDB-lite"/>
    </source>
</evidence>
<evidence type="ECO:0000305" key="3"/>
<sequence length="199" mass="22927">MGDPKFHHKKYSTPRHPWEKERIDEENKIVVKYGLKNKKEIWRSEALLSSIRSQARDLRARLRTNDVNAQKQLERMIKRLNRYKLLSENATLDDVLSLTVENILDRRLQTIVFRKNLAISVRQARQLITHGHISVAGRRVTVPGMLVEAKDEDTIAYEENSPVANELHPIRQALLAPAQRSAEMKEGQGEASEEGETDE</sequence>
<keyword id="KW-1185">Reference proteome</keyword>
<keyword id="KW-0687">Ribonucleoprotein</keyword>
<keyword id="KW-0689">Ribosomal protein</keyword>
<keyword id="KW-0694">RNA-binding</keyword>
<keyword id="KW-0699">rRNA-binding</keyword>
<accession>Q9HJD7</accession>